<gene>
    <name evidence="1" type="primary">ilvC</name>
    <name type="ordered locus">SYO3AOP1_0228</name>
</gene>
<accession>B2V7F0</accession>
<reference key="1">
    <citation type="journal article" date="2009" name="J. Bacteriol.">
        <title>Complete and draft genome sequences of six members of the Aquificales.</title>
        <authorList>
            <person name="Reysenbach A.-L."/>
            <person name="Hamamura N."/>
            <person name="Podar M."/>
            <person name="Griffiths E."/>
            <person name="Ferreira S."/>
            <person name="Hochstein R."/>
            <person name="Heidelberg J."/>
            <person name="Johnson J."/>
            <person name="Mead D."/>
            <person name="Pohorille A."/>
            <person name="Sarmiento M."/>
            <person name="Schweighofer K."/>
            <person name="Seshadri R."/>
            <person name="Voytek M.A."/>
        </authorList>
    </citation>
    <scope>NUCLEOTIDE SEQUENCE [LARGE SCALE GENOMIC DNA]</scope>
    <source>
        <strain>YO3AOP1</strain>
    </source>
</reference>
<dbReference type="EC" id="1.1.1.86" evidence="1"/>
<dbReference type="EMBL" id="CP001080">
    <property type="protein sequence ID" value="ACD65873.1"/>
    <property type="molecule type" value="Genomic_DNA"/>
</dbReference>
<dbReference type="RefSeq" id="WP_012458963.1">
    <property type="nucleotide sequence ID" value="NC_010730.1"/>
</dbReference>
<dbReference type="SMR" id="B2V7F0"/>
<dbReference type="STRING" id="436114.SYO3AOP1_0228"/>
<dbReference type="KEGG" id="sul:SYO3AOP1_0228"/>
<dbReference type="eggNOG" id="COG0059">
    <property type="taxonomic scope" value="Bacteria"/>
</dbReference>
<dbReference type="HOGENOM" id="CLU_033821_0_1_0"/>
<dbReference type="UniPathway" id="UPA00047">
    <property type="reaction ID" value="UER00056"/>
</dbReference>
<dbReference type="UniPathway" id="UPA00049">
    <property type="reaction ID" value="UER00060"/>
</dbReference>
<dbReference type="GO" id="GO:0005829">
    <property type="term" value="C:cytosol"/>
    <property type="evidence" value="ECO:0007669"/>
    <property type="project" value="TreeGrafter"/>
</dbReference>
<dbReference type="GO" id="GO:0004455">
    <property type="term" value="F:ketol-acid reductoisomerase activity"/>
    <property type="evidence" value="ECO:0007669"/>
    <property type="project" value="UniProtKB-UniRule"/>
</dbReference>
<dbReference type="GO" id="GO:0000287">
    <property type="term" value="F:magnesium ion binding"/>
    <property type="evidence" value="ECO:0007669"/>
    <property type="project" value="UniProtKB-UniRule"/>
</dbReference>
<dbReference type="GO" id="GO:0050661">
    <property type="term" value="F:NADP binding"/>
    <property type="evidence" value="ECO:0007669"/>
    <property type="project" value="InterPro"/>
</dbReference>
<dbReference type="GO" id="GO:0009097">
    <property type="term" value="P:isoleucine biosynthetic process"/>
    <property type="evidence" value="ECO:0007669"/>
    <property type="project" value="UniProtKB-UniRule"/>
</dbReference>
<dbReference type="GO" id="GO:0009099">
    <property type="term" value="P:L-valine biosynthetic process"/>
    <property type="evidence" value="ECO:0007669"/>
    <property type="project" value="UniProtKB-UniRule"/>
</dbReference>
<dbReference type="FunFam" id="3.40.50.720:FF:000023">
    <property type="entry name" value="Ketol-acid reductoisomerase (NADP(+))"/>
    <property type="match status" value="1"/>
</dbReference>
<dbReference type="Gene3D" id="6.10.240.10">
    <property type="match status" value="1"/>
</dbReference>
<dbReference type="Gene3D" id="3.40.50.720">
    <property type="entry name" value="NAD(P)-binding Rossmann-like Domain"/>
    <property type="match status" value="1"/>
</dbReference>
<dbReference type="HAMAP" id="MF_00435">
    <property type="entry name" value="IlvC"/>
    <property type="match status" value="1"/>
</dbReference>
<dbReference type="InterPro" id="IPR008927">
    <property type="entry name" value="6-PGluconate_DH-like_C_sf"/>
</dbReference>
<dbReference type="InterPro" id="IPR013023">
    <property type="entry name" value="KARI"/>
</dbReference>
<dbReference type="InterPro" id="IPR000506">
    <property type="entry name" value="KARI_C"/>
</dbReference>
<dbReference type="InterPro" id="IPR013116">
    <property type="entry name" value="KARI_N"/>
</dbReference>
<dbReference type="InterPro" id="IPR014359">
    <property type="entry name" value="KARI_prok"/>
</dbReference>
<dbReference type="InterPro" id="IPR036291">
    <property type="entry name" value="NAD(P)-bd_dom_sf"/>
</dbReference>
<dbReference type="NCBIfam" id="TIGR00465">
    <property type="entry name" value="ilvC"/>
    <property type="match status" value="1"/>
</dbReference>
<dbReference type="NCBIfam" id="NF004017">
    <property type="entry name" value="PRK05479.1"/>
    <property type="match status" value="1"/>
</dbReference>
<dbReference type="NCBIfam" id="NF009940">
    <property type="entry name" value="PRK13403.1"/>
    <property type="match status" value="1"/>
</dbReference>
<dbReference type="PANTHER" id="PTHR21371">
    <property type="entry name" value="KETOL-ACID REDUCTOISOMERASE, MITOCHONDRIAL"/>
    <property type="match status" value="1"/>
</dbReference>
<dbReference type="PANTHER" id="PTHR21371:SF1">
    <property type="entry name" value="KETOL-ACID REDUCTOISOMERASE, MITOCHONDRIAL"/>
    <property type="match status" value="1"/>
</dbReference>
<dbReference type="Pfam" id="PF01450">
    <property type="entry name" value="KARI_C"/>
    <property type="match status" value="1"/>
</dbReference>
<dbReference type="Pfam" id="PF07991">
    <property type="entry name" value="KARI_N"/>
    <property type="match status" value="1"/>
</dbReference>
<dbReference type="PIRSF" id="PIRSF000116">
    <property type="entry name" value="IlvC_gammaproteo"/>
    <property type="match status" value="1"/>
</dbReference>
<dbReference type="SUPFAM" id="SSF48179">
    <property type="entry name" value="6-phosphogluconate dehydrogenase C-terminal domain-like"/>
    <property type="match status" value="1"/>
</dbReference>
<dbReference type="SUPFAM" id="SSF51735">
    <property type="entry name" value="NAD(P)-binding Rossmann-fold domains"/>
    <property type="match status" value="1"/>
</dbReference>
<dbReference type="PROSITE" id="PS51851">
    <property type="entry name" value="KARI_C"/>
    <property type="match status" value="1"/>
</dbReference>
<dbReference type="PROSITE" id="PS51850">
    <property type="entry name" value="KARI_N"/>
    <property type="match status" value="1"/>
</dbReference>
<evidence type="ECO:0000255" key="1">
    <source>
        <dbReference type="HAMAP-Rule" id="MF_00435"/>
    </source>
</evidence>
<evidence type="ECO:0000255" key="2">
    <source>
        <dbReference type="PROSITE-ProRule" id="PRU01197"/>
    </source>
</evidence>
<evidence type="ECO:0000255" key="3">
    <source>
        <dbReference type="PROSITE-ProRule" id="PRU01198"/>
    </source>
</evidence>
<feature type="chain" id="PRO_1000191005" description="Ketol-acid reductoisomerase (NADP(+))">
    <location>
        <begin position="1"/>
        <end position="332"/>
    </location>
</feature>
<feature type="domain" description="KARI N-terminal Rossmann" evidence="2">
    <location>
        <begin position="2"/>
        <end position="182"/>
    </location>
</feature>
<feature type="domain" description="KARI C-terminal knotted" evidence="3">
    <location>
        <begin position="183"/>
        <end position="327"/>
    </location>
</feature>
<feature type="active site" evidence="1">
    <location>
        <position position="108"/>
    </location>
</feature>
<feature type="binding site" evidence="1">
    <location>
        <begin position="25"/>
        <end position="28"/>
    </location>
    <ligand>
        <name>NADP(+)</name>
        <dbReference type="ChEBI" id="CHEBI:58349"/>
    </ligand>
</feature>
<feature type="binding site" evidence="1">
    <location>
        <position position="51"/>
    </location>
    <ligand>
        <name>NADP(+)</name>
        <dbReference type="ChEBI" id="CHEBI:58349"/>
    </ligand>
</feature>
<feature type="binding site" evidence="1">
    <location>
        <position position="53"/>
    </location>
    <ligand>
        <name>NADP(+)</name>
        <dbReference type="ChEBI" id="CHEBI:58349"/>
    </ligand>
</feature>
<feature type="binding site" evidence="1">
    <location>
        <begin position="83"/>
        <end position="86"/>
    </location>
    <ligand>
        <name>NADP(+)</name>
        <dbReference type="ChEBI" id="CHEBI:58349"/>
    </ligand>
</feature>
<feature type="binding site" evidence="1">
    <location>
        <position position="134"/>
    </location>
    <ligand>
        <name>NADP(+)</name>
        <dbReference type="ChEBI" id="CHEBI:58349"/>
    </ligand>
</feature>
<feature type="binding site" evidence="1">
    <location>
        <position position="191"/>
    </location>
    <ligand>
        <name>Mg(2+)</name>
        <dbReference type="ChEBI" id="CHEBI:18420"/>
        <label>1</label>
    </ligand>
</feature>
<feature type="binding site" evidence="1">
    <location>
        <position position="191"/>
    </location>
    <ligand>
        <name>Mg(2+)</name>
        <dbReference type="ChEBI" id="CHEBI:18420"/>
        <label>2</label>
    </ligand>
</feature>
<feature type="binding site" evidence="1">
    <location>
        <position position="195"/>
    </location>
    <ligand>
        <name>Mg(2+)</name>
        <dbReference type="ChEBI" id="CHEBI:18420"/>
        <label>1</label>
    </ligand>
</feature>
<feature type="binding site" evidence="1">
    <location>
        <position position="227"/>
    </location>
    <ligand>
        <name>Mg(2+)</name>
        <dbReference type="ChEBI" id="CHEBI:18420"/>
        <label>2</label>
    </ligand>
</feature>
<feature type="binding site" evidence="1">
    <location>
        <position position="231"/>
    </location>
    <ligand>
        <name>Mg(2+)</name>
        <dbReference type="ChEBI" id="CHEBI:18420"/>
        <label>2</label>
    </ligand>
</feature>
<feature type="binding site" evidence="1">
    <location>
        <position position="252"/>
    </location>
    <ligand>
        <name>substrate</name>
    </ligand>
</feature>
<proteinExistence type="inferred from homology"/>
<organism>
    <name type="scientific">Sulfurihydrogenibium sp. (strain YO3AOP1)</name>
    <dbReference type="NCBI Taxonomy" id="436114"/>
    <lineage>
        <taxon>Bacteria</taxon>
        <taxon>Pseudomonadati</taxon>
        <taxon>Aquificota</taxon>
        <taxon>Aquificia</taxon>
        <taxon>Aquificales</taxon>
        <taxon>Hydrogenothermaceae</taxon>
        <taxon>Sulfurihydrogenibium</taxon>
    </lineage>
</organism>
<sequence>MANIYYDEDASLDYLKDKTVAIIGYGSQGHAHALNLRDSGIKVIIGLLAGSRSIEKAKAEGFEVYSPDEAAKKADVIMILTPDTVQPALYQSAILPNLDEGNALAFAHGFNIHFGQIVPPSYVDVFLVAPKGPGHLVRWMYEEGKGVPGLFAVYQDFTGKAREIAMAYAKGIGATRAGLIETTFKEETETDLFGEQAVLCGGATALIKAGFETLIEAGYQPEVAYFECLHELKLIVDLIYQYGISGMRYSISDTARYGDVTRGKRVYEAVKPLYKKILEEIQEGEFAKEWILENVANRPHFNALVKKDEEHPVEKVGKELRKMMPWLGGRGL</sequence>
<comment type="function">
    <text evidence="1">Involved in the biosynthesis of branched-chain amino acids (BCAA). Catalyzes an alkyl-migration followed by a ketol-acid reduction of (S)-2-acetolactate (S2AL) to yield (R)-2,3-dihydroxy-isovalerate. In the isomerase reaction, S2AL is rearranged via a Mg-dependent methyl migration to produce 3-hydroxy-3-methyl-2-ketobutyrate (HMKB). In the reductase reaction, this 2-ketoacid undergoes a metal-dependent reduction by NADPH to yield (R)-2,3-dihydroxy-isovalerate.</text>
</comment>
<comment type="catalytic activity">
    <reaction evidence="1">
        <text>(2R)-2,3-dihydroxy-3-methylbutanoate + NADP(+) = (2S)-2-acetolactate + NADPH + H(+)</text>
        <dbReference type="Rhea" id="RHEA:22068"/>
        <dbReference type="ChEBI" id="CHEBI:15378"/>
        <dbReference type="ChEBI" id="CHEBI:49072"/>
        <dbReference type="ChEBI" id="CHEBI:57783"/>
        <dbReference type="ChEBI" id="CHEBI:58349"/>
        <dbReference type="ChEBI" id="CHEBI:58476"/>
        <dbReference type="EC" id="1.1.1.86"/>
    </reaction>
</comment>
<comment type="catalytic activity">
    <reaction evidence="1">
        <text>(2R,3R)-2,3-dihydroxy-3-methylpentanoate + NADP(+) = (S)-2-ethyl-2-hydroxy-3-oxobutanoate + NADPH + H(+)</text>
        <dbReference type="Rhea" id="RHEA:13493"/>
        <dbReference type="ChEBI" id="CHEBI:15378"/>
        <dbReference type="ChEBI" id="CHEBI:49256"/>
        <dbReference type="ChEBI" id="CHEBI:49258"/>
        <dbReference type="ChEBI" id="CHEBI:57783"/>
        <dbReference type="ChEBI" id="CHEBI:58349"/>
        <dbReference type="EC" id="1.1.1.86"/>
    </reaction>
</comment>
<comment type="cofactor">
    <cofactor evidence="1">
        <name>Mg(2+)</name>
        <dbReference type="ChEBI" id="CHEBI:18420"/>
    </cofactor>
    <text evidence="1">Binds 2 magnesium ions per subunit.</text>
</comment>
<comment type="pathway">
    <text evidence="1">Amino-acid biosynthesis; L-isoleucine biosynthesis; L-isoleucine from 2-oxobutanoate: step 2/4.</text>
</comment>
<comment type="pathway">
    <text evidence="1">Amino-acid biosynthesis; L-valine biosynthesis; L-valine from pyruvate: step 2/4.</text>
</comment>
<comment type="similarity">
    <text evidence="1">Belongs to the ketol-acid reductoisomerase family.</text>
</comment>
<protein>
    <recommendedName>
        <fullName evidence="1">Ketol-acid reductoisomerase (NADP(+))</fullName>
        <shortName evidence="1">KARI</shortName>
        <ecNumber evidence="1">1.1.1.86</ecNumber>
    </recommendedName>
    <alternativeName>
        <fullName evidence="1">Acetohydroxy-acid isomeroreductase</fullName>
        <shortName evidence="1">AHIR</shortName>
    </alternativeName>
    <alternativeName>
        <fullName evidence="1">Alpha-keto-beta-hydroxylacyl reductoisomerase</fullName>
    </alternativeName>
    <alternativeName>
        <fullName evidence="1">Ketol-acid reductoisomerase type 1</fullName>
    </alternativeName>
    <alternativeName>
        <fullName evidence="1">Ketol-acid reductoisomerase type I</fullName>
    </alternativeName>
</protein>
<name>ILVC_SULSY</name>
<keyword id="KW-0028">Amino-acid biosynthesis</keyword>
<keyword id="KW-0100">Branched-chain amino acid biosynthesis</keyword>
<keyword id="KW-0460">Magnesium</keyword>
<keyword id="KW-0479">Metal-binding</keyword>
<keyword id="KW-0521">NADP</keyword>
<keyword id="KW-0560">Oxidoreductase</keyword>